<dbReference type="EC" id="2.7.7.6" evidence="1"/>
<dbReference type="EMBL" id="CP000038">
    <property type="protein sequence ID" value="AAZ89998.1"/>
    <property type="molecule type" value="Genomic_DNA"/>
</dbReference>
<dbReference type="RefSeq" id="WP_001162094.1">
    <property type="nucleotide sequence ID" value="NC_007384.1"/>
</dbReference>
<dbReference type="SMR" id="Q3YWW4"/>
<dbReference type="GeneID" id="93778692"/>
<dbReference type="KEGG" id="ssn:SSON_3436"/>
<dbReference type="HOGENOM" id="CLU_053084_0_0_6"/>
<dbReference type="Proteomes" id="UP000002529">
    <property type="component" value="Chromosome"/>
</dbReference>
<dbReference type="GO" id="GO:0005737">
    <property type="term" value="C:cytoplasm"/>
    <property type="evidence" value="ECO:0007669"/>
    <property type="project" value="UniProtKB-ARBA"/>
</dbReference>
<dbReference type="GO" id="GO:0000428">
    <property type="term" value="C:DNA-directed RNA polymerase complex"/>
    <property type="evidence" value="ECO:0007669"/>
    <property type="project" value="UniProtKB-KW"/>
</dbReference>
<dbReference type="GO" id="GO:0003677">
    <property type="term" value="F:DNA binding"/>
    <property type="evidence" value="ECO:0007669"/>
    <property type="project" value="UniProtKB-UniRule"/>
</dbReference>
<dbReference type="GO" id="GO:0003899">
    <property type="term" value="F:DNA-directed RNA polymerase activity"/>
    <property type="evidence" value="ECO:0007669"/>
    <property type="project" value="UniProtKB-UniRule"/>
</dbReference>
<dbReference type="GO" id="GO:0046983">
    <property type="term" value="F:protein dimerization activity"/>
    <property type="evidence" value="ECO:0007669"/>
    <property type="project" value="InterPro"/>
</dbReference>
<dbReference type="GO" id="GO:0006351">
    <property type="term" value="P:DNA-templated transcription"/>
    <property type="evidence" value="ECO:0007669"/>
    <property type="project" value="UniProtKB-UniRule"/>
</dbReference>
<dbReference type="CDD" id="cd06928">
    <property type="entry name" value="RNAP_alpha_NTD"/>
    <property type="match status" value="1"/>
</dbReference>
<dbReference type="FunFam" id="1.10.150.20:FF:000001">
    <property type="entry name" value="DNA-directed RNA polymerase subunit alpha"/>
    <property type="match status" value="1"/>
</dbReference>
<dbReference type="FunFam" id="2.170.120.12:FF:000001">
    <property type="entry name" value="DNA-directed RNA polymerase subunit alpha"/>
    <property type="match status" value="1"/>
</dbReference>
<dbReference type="Gene3D" id="1.10.150.20">
    <property type="entry name" value="5' to 3' exonuclease, C-terminal subdomain"/>
    <property type="match status" value="1"/>
</dbReference>
<dbReference type="Gene3D" id="2.170.120.12">
    <property type="entry name" value="DNA-directed RNA polymerase, insert domain"/>
    <property type="match status" value="1"/>
</dbReference>
<dbReference type="Gene3D" id="3.30.1360.10">
    <property type="entry name" value="RNA polymerase, RBP11-like subunit"/>
    <property type="match status" value="1"/>
</dbReference>
<dbReference type="HAMAP" id="MF_00059">
    <property type="entry name" value="RNApol_bact_RpoA"/>
    <property type="match status" value="1"/>
</dbReference>
<dbReference type="InterPro" id="IPR011262">
    <property type="entry name" value="DNA-dir_RNA_pol_insert"/>
</dbReference>
<dbReference type="InterPro" id="IPR011263">
    <property type="entry name" value="DNA-dir_RNA_pol_RpoA/D/Rpb3"/>
</dbReference>
<dbReference type="InterPro" id="IPR011773">
    <property type="entry name" value="DNA-dir_RpoA"/>
</dbReference>
<dbReference type="InterPro" id="IPR036603">
    <property type="entry name" value="RBP11-like"/>
</dbReference>
<dbReference type="InterPro" id="IPR011260">
    <property type="entry name" value="RNAP_asu_C"/>
</dbReference>
<dbReference type="InterPro" id="IPR036643">
    <property type="entry name" value="RNApol_insert_sf"/>
</dbReference>
<dbReference type="NCBIfam" id="NF003513">
    <property type="entry name" value="PRK05182.1-2"/>
    <property type="match status" value="1"/>
</dbReference>
<dbReference type="NCBIfam" id="NF003519">
    <property type="entry name" value="PRK05182.2-5"/>
    <property type="match status" value="1"/>
</dbReference>
<dbReference type="NCBIfam" id="TIGR02027">
    <property type="entry name" value="rpoA"/>
    <property type="match status" value="1"/>
</dbReference>
<dbReference type="Pfam" id="PF01000">
    <property type="entry name" value="RNA_pol_A_bac"/>
    <property type="match status" value="1"/>
</dbReference>
<dbReference type="Pfam" id="PF03118">
    <property type="entry name" value="RNA_pol_A_CTD"/>
    <property type="match status" value="1"/>
</dbReference>
<dbReference type="Pfam" id="PF01193">
    <property type="entry name" value="RNA_pol_L"/>
    <property type="match status" value="1"/>
</dbReference>
<dbReference type="SMART" id="SM00662">
    <property type="entry name" value="RPOLD"/>
    <property type="match status" value="1"/>
</dbReference>
<dbReference type="SUPFAM" id="SSF47789">
    <property type="entry name" value="C-terminal domain of RNA polymerase alpha subunit"/>
    <property type="match status" value="1"/>
</dbReference>
<dbReference type="SUPFAM" id="SSF56553">
    <property type="entry name" value="Insert subdomain of RNA polymerase alpha subunit"/>
    <property type="match status" value="1"/>
</dbReference>
<dbReference type="SUPFAM" id="SSF55257">
    <property type="entry name" value="RBP11-like subunits of RNA polymerase"/>
    <property type="match status" value="1"/>
</dbReference>
<gene>
    <name evidence="1" type="primary">rpoA</name>
    <name type="ordered locus">SSON_3436</name>
</gene>
<accession>Q3YWW4</accession>
<keyword id="KW-0240">DNA-directed RNA polymerase</keyword>
<keyword id="KW-0548">Nucleotidyltransferase</keyword>
<keyword id="KW-1185">Reference proteome</keyword>
<keyword id="KW-0804">Transcription</keyword>
<keyword id="KW-0808">Transferase</keyword>
<comment type="function">
    <text evidence="1">DNA-dependent RNA polymerase catalyzes the transcription of DNA into RNA using the four ribonucleoside triphosphates as substrates.</text>
</comment>
<comment type="catalytic activity">
    <reaction evidence="1">
        <text>RNA(n) + a ribonucleoside 5'-triphosphate = RNA(n+1) + diphosphate</text>
        <dbReference type="Rhea" id="RHEA:21248"/>
        <dbReference type="Rhea" id="RHEA-COMP:14527"/>
        <dbReference type="Rhea" id="RHEA-COMP:17342"/>
        <dbReference type="ChEBI" id="CHEBI:33019"/>
        <dbReference type="ChEBI" id="CHEBI:61557"/>
        <dbReference type="ChEBI" id="CHEBI:140395"/>
        <dbReference type="EC" id="2.7.7.6"/>
    </reaction>
</comment>
<comment type="subunit">
    <text evidence="1">Homodimer. The RNAP catalytic core consists of 2 alpha, 1 beta, 1 beta' and 1 omega subunit. When a sigma factor is associated with the core the holoenzyme is formed, which can initiate transcription.</text>
</comment>
<comment type="domain">
    <text evidence="1">The N-terminal domain is essential for RNAP assembly and basal transcription, whereas the C-terminal domain is involved in interaction with transcriptional regulators and with upstream promoter elements.</text>
</comment>
<comment type="similarity">
    <text evidence="1">Belongs to the RNA polymerase alpha chain family.</text>
</comment>
<name>RPOA_SHISS</name>
<feature type="chain" id="PRO_0000225302" description="DNA-directed RNA polymerase subunit alpha">
    <location>
        <begin position="1"/>
        <end position="329"/>
    </location>
</feature>
<feature type="region of interest" description="Alpha N-terminal domain (alpha-NTD)" evidence="1">
    <location>
        <begin position="1"/>
        <end position="235"/>
    </location>
</feature>
<feature type="region of interest" description="Alpha C-terminal domain (alpha-CTD)" evidence="1">
    <location>
        <begin position="249"/>
        <end position="329"/>
    </location>
</feature>
<reference key="1">
    <citation type="journal article" date="2005" name="Nucleic Acids Res.">
        <title>Genome dynamics and diversity of Shigella species, the etiologic agents of bacillary dysentery.</title>
        <authorList>
            <person name="Yang F."/>
            <person name="Yang J."/>
            <person name="Zhang X."/>
            <person name="Chen L."/>
            <person name="Jiang Y."/>
            <person name="Yan Y."/>
            <person name="Tang X."/>
            <person name="Wang J."/>
            <person name="Xiong Z."/>
            <person name="Dong J."/>
            <person name="Xue Y."/>
            <person name="Zhu Y."/>
            <person name="Xu X."/>
            <person name="Sun L."/>
            <person name="Chen S."/>
            <person name="Nie H."/>
            <person name="Peng J."/>
            <person name="Xu J."/>
            <person name="Wang Y."/>
            <person name="Yuan Z."/>
            <person name="Wen Y."/>
            <person name="Yao Z."/>
            <person name="Shen Y."/>
            <person name="Qiang B."/>
            <person name="Hou Y."/>
            <person name="Yu J."/>
            <person name="Jin Q."/>
        </authorList>
    </citation>
    <scope>NUCLEOTIDE SEQUENCE [LARGE SCALE GENOMIC DNA]</scope>
    <source>
        <strain>Ss046</strain>
    </source>
</reference>
<organism>
    <name type="scientific">Shigella sonnei (strain Ss046)</name>
    <dbReference type="NCBI Taxonomy" id="300269"/>
    <lineage>
        <taxon>Bacteria</taxon>
        <taxon>Pseudomonadati</taxon>
        <taxon>Pseudomonadota</taxon>
        <taxon>Gammaproteobacteria</taxon>
        <taxon>Enterobacterales</taxon>
        <taxon>Enterobacteriaceae</taxon>
        <taxon>Shigella</taxon>
    </lineage>
</organism>
<protein>
    <recommendedName>
        <fullName evidence="1">DNA-directed RNA polymerase subunit alpha</fullName>
        <shortName evidence="1">RNAP subunit alpha</shortName>
        <ecNumber evidence="1">2.7.7.6</ecNumber>
    </recommendedName>
    <alternativeName>
        <fullName evidence="1">RNA polymerase subunit alpha</fullName>
    </alternativeName>
    <alternativeName>
        <fullName evidence="1">Transcriptase subunit alpha</fullName>
    </alternativeName>
</protein>
<proteinExistence type="inferred from homology"/>
<sequence length="329" mass="36512">MQGSVTEFLKPRLVDIEQVSSTHAKVTLEPLERGFGHTLGNALRRILLSSMPGCAVTEVEIDGVLHEYSTKEGVQEDILEILLNLKGLAVRVQGKDEVILTLNKSGIGPVTAADITHDGDVEIVKPQHVICHLTDENASISMRIKVQRGRGYVPASTRIHSEEDERPIGRLLVDACYSPVERIAYNVEAARVEQRTDLDKLVIEMETNGTIDPEEAIRRAATILAEQLEAFVDLRDVRQPEVKEEKPEFDPILLRPVDDLELTVRSANCLKAEAIHYIGDLVQRTEVELLKTPNLGKKSLTEIKDVLASRGLSLGMRLENWPPASIADE</sequence>
<evidence type="ECO:0000255" key="1">
    <source>
        <dbReference type="HAMAP-Rule" id="MF_00059"/>
    </source>
</evidence>